<gene>
    <name evidence="1" type="primary">rpsE</name>
    <name type="ordered locus">Sfri_0165</name>
</gene>
<comment type="function">
    <text evidence="1">With S4 and S12 plays an important role in translational accuracy.</text>
</comment>
<comment type="function">
    <text evidence="1">Located at the back of the 30S subunit body where it stabilizes the conformation of the head with respect to the body.</text>
</comment>
<comment type="subunit">
    <text evidence="1">Part of the 30S ribosomal subunit. Contacts proteins S4 and S8.</text>
</comment>
<comment type="domain">
    <text>The N-terminal domain interacts with the head of the 30S subunit; the C-terminal domain interacts with the body and contacts protein S4. The interaction surface between S4 and S5 is involved in control of translational fidelity.</text>
</comment>
<comment type="similarity">
    <text evidence="1">Belongs to the universal ribosomal protein uS5 family.</text>
</comment>
<protein>
    <recommendedName>
        <fullName evidence="1">Small ribosomal subunit protein uS5</fullName>
    </recommendedName>
    <alternativeName>
        <fullName evidence="2">30S ribosomal protein S5</fullName>
    </alternativeName>
</protein>
<reference key="1">
    <citation type="submission" date="2006-08" db="EMBL/GenBank/DDBJ databases">
        <title>Complete sequence of Shewanella frigidimarina NCIMB 400.</title>
        <authorList>
            <consortium name="US DOE Joint Genome Institute"/>
            <person name="Copeland A."/>
            <person name="Lucas S."/>
            <person name="Lapidus A."/>
            <person name="Barry K."/>
            <person name="Detter J.C."/>
            <person name="Glavina del Rio T."/>
            <person name="Hammon N."/>
            <person name="Israni S."/>
            <person name="Dalin E."/>
            <person name="Tice H."/>
            <person name="Pitluck S."/>
            <person name="Fredrickson J.K."/>
            <person name="Kolker E."/>
            <person name="McCuel L.A."/>
            <person name="DiChristina T."/>
            <person name="Nealson K.H."/>
            <person name="Newman D."/>
            <person name="Tiedje J.M."/>
            <person name="Zhou J."/>
            <person name="Romine M.F."/>
            <person name="Culley D.E."/>
            <person name="Serres M."/>
            <person name="Chertkov O."/>
            <person name="Brettin T."/>
            <person name="Bruce D."/>
            <person name="Han C."/>
            <person name="Tapia R."/>
            <person name="Gilna P."/>
            <person name="Schmutz J."/>
            <person name="Larimer F."/>
            <person name="Land M."/>
            <person name="Hauser L."/>
            <person name="Kyrpides N."/>
            <person name="Mikhailova N."/>
            <person name="Richardson P."/>
        </authorList>
    </citation>
    <scope>NUCLEOTIDE SEQUENCE [LARGE SCALE GENOMIC DNA]</scope>
    <source>
        <strain>NCIMB 400</strain>
    </source>
</reference>
<evidence type="ECO:0000255" key="1">
    <source>
        <dbReference type="HAMAP-Rule" id="MF_01307"/>
    </source>
</evidence>
<evidence type="ECO:0000305" key="2"/>
<dbReference type="EMBL" id="CP000447">
    <property type="protein sequence ID" value="ABI70028.1"/>
    <property type="molecule type" value="Genomic_DNA"/>
</dbReference>
<dbReference type="RefSeq" id="WP_011494651.1">
    <property type="nucleotide sequence ID" value="NC_008345.1"/>
</dbReference>
<dbReference type="SMR" id="Q089N7"/>
<dbReference type="STRING" id="318167.Sfri_0165"/>
<dbReference type="GeneID" id="90572190"/>
<dbReference type="KEGG" id="sfr:Sfri_0165"/>
<dbReference type="eggNOG" id="COG0098">
    <property type="taxonomic scope" value="Bacteria"/>
</dbReference>
<dbReference type="HOGENOM" id="CLU_065898_2_2_6"/>
<dbReference type="OrthoDB" id="9809045at2"/>
<dbReference type="Proteomes" id="UP000000684">
    <property type="component" value="Chromosome"/>
</dbReference>
<dbReference type="GO" id="GO:0015935">
    <property type="term" value="C:small ribosomal subunit"/>
    <property type="evidence" value="ECO:0007669"/>
    <property type="project" value="InterPro"/>
</dbReference>
<dbReference type="GO" id="GO:0019843">
    <property type="term" value="F:rRNA binding"/>
    <property type="evidence" value="ECO:0007669"/>
    <property type="project" value="UniProtKB-UniRule"/>
</dbReference>
<dbReference type="GO" id="GO:0003735">
    <property type="term" value="F:structural constituent of ribosome"/>
    <property type="evidence" value="ECO:0007669"/>
    <property type="project" value="InterPro"/>
</dbReference>
<dbReference type="GO" id="GO:0006412">
    <property type="term" value="P:translation"/>
    <property type="evidence" value="ECO:0007669"/>
    <property type="project" value="UniProtKB-UniRule"/>
</dbReference>
<dbReference type="FunFam" id="3.30.160.20:FF:000001">
    <property type="entry name" value="30S ribosomal protein S5"/>
    <property type="match status" value="1"/>
</dbReference>
<dbReference type="FunFam" id="3.30.230.10:FF:000002">
    <property type="entry name" value="30S ribosomal protein S5"/>
    <property type="match status" value="1"/>
</dbReference>
<dbReference type="Gene3D" id="3.30.160.20">
    <property type="match status" value="1"/>
</dbReference>
<dbReference type="Gene3D" id="3.30.230.10">
    <property type="match status" value="1"/>
</dbReference>
<dbReference type="HAMAP" id="MF_01307_B">
    <property type="entry name" value="Ribosomal_uS5_B"/>
    <property type="match status" value="1"/>
</dbReference>
<dbReference type="InterPro" id="IPR020568">
    <property type="entry name" value="Ribosomal_Su5_D2-typ_SF"/>
</dbReference>
<dbReference type="InterPro" id="IPR000851">
    <property type="entry name" value="Ribosomal_uS5"/>
</dbReference>
<dbReference type="InterPro" id="IPR005712">
    <property type="entry name" value="Ribosomal_uS5_bac-type"/>
</dbReference>
<dbReference type="InterPro" id="IPR005324">
    <property type="entry name" value="Ribosomal_uS5_C"/>
</dbReference>
<dbReference type="InterPro" id="IPR013810">
    <property type="entry name" value="Ribosomal_uS5_N"/>
</dbReference>
<dbReference type="InterPro" id="IPR018192">
    <property type="entry name" value="Ribosomal_uS5_N_CS"/>
</dbReference>
<dbReference type="InterPro" id="IPR014721">
    <property type="entry name" value="Ribsml_uS5_D2-typ_fold_subgr"/>
</dbReference>
<dbReference type="NCBIfam" id="TIGR01021">
    <property type="entry name" value="rpsE_bact"/>
    <property type="match status" value="1"/>
</dbReference>
<dbReference type="PANTHER" id="PTHR48277">
    <property type="entry name" value="MITOCHONDRIAL RIBOSOMAL PROTEIN S5"/>
    <property type="match status" value="1"/>
</dbReference>
<dbReference type="PANTHER" id="PTHR48277:SF1">
    <property type="entry name" value="MITOCHONDRIAL RIBOSOMAL PROTEIN S5"/>
    <property type="match status" value="1"/>
</dbReference>
<dbReference type="Pfam" id="PF00333">
    <property type="entry name" value="Ribosomal_S5"/>
    <property type="match status" value="1"/>
</dbReference>
<dbReference type="Pfam" id="PF03719">
    <property type="entry name" value="Ribosomal_S5_C"/>
    <property type="match status" value="1"/>
</dbReference>
<dbReference type="SUPFAM" id="SSF54768">
    <property type="entry name" value="dsRNA-binding domain-like"/>
    <property type="match status" value="1"/>
</dbReference>
<dbReference type="SUPFAM" id="SSF54211">
    <property type="entry name" value="Ribosomal protein S5 domain 2-like"/>
    <property type="match status" value="1"/>
</dbReference>
<dbReference type="PROSITE" id="PS00585">
    <property type="entry name" value="RIBOSOMAL_S5"/>
    <property type="match status" value="1"/>
</dbReference>
<dbReference type="PROSITE" id="PS50881">
    <property type="entry name" value="S5_DSRBD"/>
    <property type="match status" value="1"/>
</dbReference>
<keyword id="KW-1185">Reference proteome</keyword>
<keyword id="KW-0687">Ribonucleoprotein</keyword>
<keyword id="KW-0689">Ribosomal protein</keyword>
<keyword id="KW-0694">RNA-binding</keyword>
<keyword id="KW-0699">rRNA-binding</keyword>
<name>RS5_SHEFN</name>
<proteinExistence type="inferred from homology"/>
<organism>
    <name type="scientific">Shewanella frigidimarina (strain NCIMB 400)</name>
    <dbReference type="NCBI Taxonomy" id="318167"/>
    <lineage>
        <taxon>Bacteria</taxon>
        <taxon>Pseudomonadati</taxon>
        <taxon>Pseudomonadota</taxon>
        <taxon>Gammaproteobacteria</taxon>
        <taxon>Alteromonadales</taxon>
        <taxon>Shewanellaceae</taxon>
        <taxon>Shewanella</taxon>
    </lineage>
</organism>
<accession>Q089N7</accession>
<sequence length="167" mass="17711">MAKLEAQQKDDLQEKLIAVNRVSKVVKGGRIFSFTALTVVGDGNGKIGYGYGKAREVPAAIQKAMEKARRNMVTVELNAGTLHHPVKGRHTGSKVYMQPASQGTGIIAGGAMRAVLEVAGVHNVLSKAYGSTNPINIVRATVDALVHMKSPAQIAAKRGLNVDEIRG</sequence>
<feature type="chain" id="PRO_0000323196" description="Small ribosomal subunit protein uS5">
    <location>
        <begin position="1"/>
        <end position="167"/>
    </location>
</feature>
<feature type="domain" description="S5 DRBM" evidence="1">
    <location>
        <begin position="12"/>
        <end position="75"/>
    </location>
</feature>